<feature type="chain" id="PRO_1000129476" description="Nicotinate phosphoribosyltransferase">
    <location>
        <begin position="1"/>
        <end position="395"/>
    </location>
</feature>
<feature type="modified residue" description="Phosphohistidine; by autocatalysis" evidence="1">
    <location>
        <position position="222"/>
    </location>
</feature>
<proteinExistence type="inferred from homology"/>
<comment type="function">
    <text evidence="1">Catalyzes the synthesis of beta-nicotinate D-ribonucleotide from nicotinate and 5-phospho-D-ribose 1-phosphate at the expense of ATP.</text>
</comment>
<comment type="catalytic activity">
    <reaction evidence="1">
        <text>nicotinate + 5-phospho-alpha-D-ribose 1-diphosphate + ATP + H2O = nicotinate beta-D-ribonucleotide + ADP + phosphate + diphosphate</text>
        <dbReference type="Rhea" id="RHEA:36163"/>
        <dbReference type="ChEBI" id="CHEBI:15377"/>
        <dbReference type="ChEBI" id="CHEBI:30616"/>
        <dbReference type="ChEBI" id="CHEBI:32544"/>
        <dbReference type="ChEBI" id="CHEBI:33019"/>
        <dbReference type="ChEBI" id="CHEBI:43474"/>
        <dbReference type="ChEBI" id="CHEBI:57502"/>
        <dbReference type="ChEBI" id="CHEBI:58017"/>
        <dbReference type="ChEBI" id="CHEBI:456216"/>
        <dbReference type="EC" id="6.3.4.21"/>
    </reaction>
</comment>
<comment type="pathway">
    <text evidence="1">Cofactor biosynthesis; NAD(+) biosynthesis; nicotinate D-ribonucleotide from nicotinate: step 1/1.</text>
</comment>
<comment type="PTM">
    <text evidence="1">Transiently phosphorylated on a His residue during the reaction cycle. Phosphorylation strongly increases the affinity for substrates and increases the rate of nicotinate D-ribonucleotide production. Dephosphorylation regenerates the low-affinity form of the enzyme, leading to product release.</text>
</comment>
<comment type="similarity">
    <text evidence="1">Belongs to the NAPRTase family.</text>
</comment>
<evidence type="ECO:0000255" key="1">
    <source>
        <dbReference type="HAMAP-Rule" id="MF_00570"/>
    </source>
</evidence>
<accession>Q128P8</accession>
<reference key="1">
    <citation type="journal article" date="2008" name="Appl. Environ. Microbiol.">
        <title>The genome of Polaromonas sp. strain JS666: insights into the evolution of a hydrocarbon- and xenobiotic-degrading bacterium, and features of relevance to biotechnology.</title>
        <authorList>
            <person name="Mattes T.E."/>
            <person name="Alexander A.K."/>
            <person name="Richardson P.M."/>
            <person name="Munk A.C."/>
            <person name="Han C.S."/>
            <person name="Stothard P."/>
            <person name="Coleman N.V."/>
        </authorList>
    </citation>
    <scope>NUCLEOTIDE SEQUENCE [LARGE SCALE GENOMIC DNA]</scope>
    <source>
        <strain>JS666 / ATCC BAA-500</strain>
    </source>
</reference>
<protein>
    <recommendedName>
        <fullName evidence="1">Nicotinate phosphoribosyltransferase</fullName>
        <shortName evidence="1">NAPRTase</shortName>
        <ecNumber evidence="1">6.3.4.21</ecNumber>
    </recommendedName>
</protein>
<name>PNCB_POLSJ</name>
<gene>
    <name evidence="1" type="primary">pncB</name>
    <name type="ordered locus">Bpro_3080</name>
</gene>
<sequence length="395" mass="45099">MIITSLLDTDLYKFTMMQVVLHQFPGAEVEYRFKCRNAGAPGIGKLAPYVNEIREEIRGLCNLRFQDAELAYLKAMRFIKSDFVDFLGIFKLNEKYVSVTALPSGEIEVSIKGPWLHTILFEIPVLAIINEVYFRNTQKQPDLTEGRKRLDTKILELQADGLRELKIADYGTRRRFGKVWHEEVLRTLVTRLGTGMSGQLAGTSNVLFAMKLGLTPLGTMAHEYLQACQALGPRLRDSQVFGFESWAREYRGDLGIALSDVYGMSAFLRDFDMYFCKLFDGARHDSGDPFEWGERMLAHYVKNRVDPRTKTLIFSDALTVPRTIELYQQFRGRCQLAFGIGTNLTNDLGYEPLQIVIKMIRCNGQPVAKLSDTPSKNMCEDEKYLAYLRQVFEIG</sequence>
<keyword id="KW-0436">Ligase</keyword>
<keyword id="KW-0597">Phosphoprotein</keyword>
<keyword id="KW-0662">Pyridine nucleotide biosynthesis</keyword>
<keyword id="KW-1185">Reference proteome</keyword>
<organism>
    <name type="scientific">Polaromonas sp. (strain JS666 / ATCC BAA-500)</name>
    <dbReference type="NCBI Taxonomy" id="296591"/>
    <lineage>
        <taxon>Bacteria</taxon>
        <taxon>Pseudomonadati</taxon>
        <taxon>Pseudomonadota</taxon>
        <taxon>Betaproteobacteria</taxon>
        <taxon>Burkholderiales</taxon>
        <taxon>Comamonadaceae</taxon>
        <taxon>Polaromonas</taxon>
    </lineage>
</organism>
<dbReference type="EC" id="6.3.4.21" evidence="1"/>
<dbReference type="EMBL" id="CP000316">
    <property type="protein sequence ID" value="ABE44994.1"/>
    <property type="molecule type" value="Genomic_DNA"/>
</dbReference>
<dbReference type="RefSeq" id="WP_011483990.1">
    <property type="nucleotide sequence ID" value="NC_007948.1"/>
</dbReference>
<dbReference type="SMR" id="Q128P8"/>
<dbReference type="STRING" id="296591.Bpro_3080"/>
<dbReference type="KEGG" id="pol:Bpro_3080"/>
<dbReference type="eggNOG" id="COG1488">
    <property type="taxonomic scope" value="Bacteria"/>
</dbReference>
<dbReference type="HOGENOM" id="CLU_030991_1_0_4"/>
<dbReference type="OrthoDB" id="9771406at2"/>
<dbReference type="UniPathway" id="UPA00253">
    <property type="reaction ID" value="UER00457"/>
</dbReference>
<dbReference type="Proteomes" id="UP000001983">
    <property type="component" value="Chromosome"/>
</dbReference>
<dbReference type="GO" id="GO:0005829">
    <property type="term" value="C:cytosol"/>
    <property type="evidence" value="ECO:0007669"/>
    <property type="project" value="TreeGrafter"/>
</dbReference>
<dbReference type="GO" id="GO:0004516">
    <property type="term" value="F:nicotinate phosphoribosyltransferase activity"/>
    <property type="evidence" value="ECO:0007669"/>
    <property type="project" value="UniProtKB-UniRule"/>
</dbReference>
<dbReference type="GO" id="GO:0034355">
    <property type="term" value="P:NAD biosynthetic process via the salvage pathway"/>
    <property type="evidence" value="ECO:0007669"/>
    <property type="project" value="TreeGrafter"/>
</dbReference>
<dbReference type="CDD" id="cd01401">
    <property type="entry name" value="PncB_like"/>
    <property type="match status" value="1"/>
</dbReference>
<dbReference type="Gene3D" id="3.20.140.10">
    <property type="entry name" value="nicotinate phosphoribosyltransferase"/>
    <property type="match status" value="1"/>
</dbReference>
<dbReference type="HAMAP" id="MF_00570">
    <property type="entry name" value="NAPRTase"/>
    <property type="match status" value="1"/>
</dbReference>
<dbReference type="InterPro" id="IPR041525">
    <property type="entry name" value="N/Namide_PRibTrfase"/>
</dbReference>
<dbReference type="InterPro" id="IPR040727">
    <property type="entry name" value="NAPRTase_N"/>
</dbReference>
<dbReference type="InterPro" id="IPR006406">
    <property type="entry name" value="Nic_PRibTrfase"/>
</dbReference>
<dbReference type="InterPro" id="IPR007229">
    <property type="entry name" value="Nic_PRibTrfase-Fam"/>
</dbReference>
<dbReference type="InterPro" id="IPR036068">
    <property type="entry name" value="Nicotinate_pribotase-like_C"/>
</dbReference>
<dbReference type="NCBIfam" id="TIGR01514">
    <property type="entry name" value="NAPRTase"/>
    <property type="match status" value="1"/>
</dbReference>
<dbReference type="NCBIfam" id="NF003704">
    <property type="entry name" value="PRK05321.1"/>
    <property type="match status" value="1"/>
</dbReference>
<dbReference type="PANTHER" id="PTHR11098">
    <property type="entry name" value="NICOTINATE PHOSPHORIBOSYLTRANSFERASE"/>
    <property type="match status" value="1"/>
</dbReference>
<dbReference type="PANTHER" id="PTHR11098:SF1">
    <property type="entry name" value="NICOTINATE PHOSPHORIBOSYLTRANSFERASE"/>
    <property type="match status" value="1"/>
</dbReference>
<dbReference type="Pfam" id="PF04095">
    <property type="entry name" value="NAPRTase"/>
    <property type="match status" value="1"/>
</dbReference>
<dbReference type="Pfam" id="PF17767">
    <property type="entry name" value="NAPRTase_N"/>
    <property type="match status" value="1"/>
</dbReference>
<dbReference type="PIRSF" id="PIRSF000484">
    <property type="entry name" value="NAPRT"/>
    <property type="match status" value="1"/>
</dbReference>
<dbReference type="SUPFAM" id="SSF51690">
    <property type="entry name" value="Nicotinate/Quinolinate PRTase C-terminal domain-like"/>
    <property type="match status" value="1"/>
</dbReference>
<dbReference type="SUPFAM" id="SSF54675">
    <property type="entry name" value="Nicotinate/Quinolinate PRTase N-terminal domain-like"/>
    <property type="match status" value="1"/>
</dbReference>